<name>STT3B_HUMAN</name>
<protein>
    <recommendedName>
        <fullName evidence="18">Dolichyl-diphosphooligosaccharide--protein glycosyltransferase subunit STT3B</fullName>
        <shortName>Oligosaccharyl transferase subunit STT3B</shortName>
        <shortName>STT3-B</shortName>
        <ecNumber evidence="10 11 15">2.4.99.18</ecNumber>
    </recommendedName>
    <alternativeName>
        <fullName>Source of immunodominant MHC-associated peptides homolog</fullName>
    </alternativeName>
</protein>
<dbReference type="EC" id="2.4.99.18" evidence="10 11 15"/>
<dbReference type="EMBL" id="AY074880">
    <property type="protein sequence ID" value="AAL71884.1"/>
    <property type="molecule type" value="mRNA"/>
</dbReference>
<dbReference type="EMBL" id="AC104643">
    <property type="status" value="NOT_ANNOTATED_CDS"/>
    <property type="molecule type" value="Genomic_DNA"/>
</dbReference>
<dbReference type="EMBL" id="AK027789">
    <property type="protein sequence ID" value="BAB55370.1"/>
    <property type="status" value="ALT_INIT"/>
    <property type="molecule type" value="mRNA"/>
</dbReference>
<dbReference type="EMBL" id="AK075380">
    <property type="protein sequence ID" value="BAC11581.1"/>
    <property type="status" value="ALT_INIT"/>
    <property type="molecule type" value="mRNA"/>
</dbReference>
<dbReference type="EMBL" id="BC015880">
    <property type="protein sequence ID" value="AAH15880.1"/>
    <property type="status" value="ALT_INIT"/>
    <property type="molecule type" value="mRNA"/>
</dbReference>
<dbReference type="CCDS" id="CCDS2650.1"/>
<dbReference type="RefSeq" id="NP_849193.1">
    <property type="nucleotide sequence ID" value="NM_178862.3"/>
</dbReference>
<dbReference type="PDB" id="6S7T">
    <property type="method" value="EM"/>
    <property type="resolution" value="3.50 A"/>
    <property type="chains" value="A=1-826"/>
</dbReference>
<dbReference type="PDBsum" id="6S7T"/>
<dbReference type="EMDB" id="EMD-10112"/>
<dbReference type="SMR" id="Q8TCJ2"/>
<dbReference type="BioGRID" id="128394">
    <property type="interactions" value="292"/>
</dbReference>
<dbReference type="ComplexPortal" id="CPX-5622">
    <property type="entry name" value="Oligosaccharyltransferase complex B, MAGT1 variant"/>
</dbReference>
<dbReference type="ComplexPortal" id="CPX-8738">
    <property type="entry name" value="Oligosaccharyltransferase complex B, TUCS3 variant"/>
</dbReference>
<dbReference type="CORUM" id="Q8TCJ2"/>
<dbReference type="FunCoup" id="Q8TCJ2">
    <property type="interactions" value="2600"/>
</dbReference>
<dbReference type="IntAct" id="Q8TCJ2">
    <property type="interactions" value="156"/>
</dbReference>
<dbReference type="MINT" id="Q8TCJ2"/>
<dbReference type="STRING" id="9606.ENSP00000295770"/>
<dbReference type="CAZy" id="GT66">
    <property type="family name" value="Glycosyltransferase Family 66"/>
</dbReference>
<dbReference type="TCDB" id="9.B.142.3.17">
    <property type="family name" value="the integral membrane glycosyltransferase family 39 (gt39) family"/>
</dbReference>
<dbReference type="GlyConnect" id="1189">
    <property type="glycosylation" value="14 N-Linked glycans (3 sites)"/>
</dbReference>
<dbReference type="GlyCosmos" id="Q8TCJ2">
    <property type="glycosylation" value="5 sites, 17 glycans"/>
</dbReference>
<dbReference type="GlyGen" id="Q8TCJ2">
    <property type="glycosylation" value="12 sites, 44 N-linked glycans (4 sites), 1 O-linked glycan (6 sites)"/>
</dbReference>
<dbReference type="iPTMnet" id="Q8TCJ2"/>
<dbReference type="MetOSite" id="Q8TCJ2"/>
<dbReference type="PhosphoSitePlus" id="Q8TCJ2"/>
<dbReference type="SwissPalm" id="Q8TCJ2"/>
<dbReference type="BioMuta" id="STT3B"/>
<dbReference type="DMDM" id="74715800"/>
<dbReference type="jPOST" id="Q8TCJ2"/>
<dbReference type="MassIVE" id="Q8TCJ2"/>
<dbReference type="PaxDb" id="9606-ENSP00000295770"/>
<dbReference type="PeptideAtlas" id="Q8TCJ2"/>
<dbReference type="PRIDE" id="Q8TCJ2"/>
<dbReference type="ProteomicsDB" id="74146"/>
<dbReference type="Pumba" id="Q8TCJ2"/>
<dbReference type="Antibodypedia" id="45312">
    <property type="antibodies" value="43 antibodies from 16 providers"/>
</dbReference>
<dbReference type="DNASU" id="201595"/>
<dbReference type="Ensembl" id="ENST00000295770.4">
    <property type="protein sequence ID" value="ENSP00000295770.2"/>
    <property type="gene ID" value="ENSG00000163527.11"/>
</dbReference>
<dbReference type="GeneID" id="201595"/>
<dbReference type="KEGG" id="hsa:201595"/>
<dbReference type="MANE-Select" id="ENST00000295770.4">
    <property type="protein sequence ID" value="ENSP00000295770.2"/>
    <property type="RefSeq nucleotide sequence ID" value="NM_178862.3"/>
    <property type="RefSeq protein sequence ID" value="NP_849193.1"/>
</dbReference>
<dbReference type="UCSC" id="uc011axe.3">
    <property type="organism name" value="human"/>
</dbReference>
<dbReference type="AGR" id="HGNC:30611"/>
<dbReference type="CTD" id="201595"/>
<dbReference type="DisGeNET" id="201595"/>
<dbReference type="GeneCards" id="STT3B"/>
<dbReference type="HGNC" id="HGNC:30611">
    <property type="gene designation" value="STT3B"/>
</dbReference>
<dbReference type="HPA" id="ENSG00000163527">
    <property type="expression patterns" value="Low tissue specificity"/>
</dbReference>
<dbReference type="MalaCards" id="STT3B"/>
<dbReference type="MIM" id="608605">
    <property type="type" value="gene"/>
</dbReference>
<dbReference type="MIM" id="615597">
    <property type="type" value="phenotype"/>
</dbReference>
<dbReference type="neXtProt" id="NX_Q8TCJ2"/>
<dbReference type="OpenTargets" id="ENSG00000163527"/>
<dbReference type="Orphanet" id="370924">
    <property type="disease" value="STT3B-CDG"/>
</dbReference>
<dbReference type="PharmGKB" id="PA143485625"/>
<dbReference type="VEuPathDB" id="HostDB:ENSG00000163527"/>
<dbReference type="eggNOG" id="KOG2292">
    <property type="taxonomic scope" value="Eukaryota"/>
</dbReference>
<dbReference type="GeneTree" id="ENSGT00940000155488"/>
<dbReference type="HOGENOM" id="CLU_009279_1_0_1"/>
<dbReference type="InParanoid" id="Q8TCJ2"/>
<dbReference type="OMA" id="TKELWSP"/>
<dbReference type="OrthoDB" id="10261066at2759"/>
<dbReference type="PAN-GO" id="Q8TCJ2">
    <property type="GO annotations" value="3 GO annotations based on evolutionary models"/>
</dbReference>
<dbReference type="PhylomeDB" id="Q8TCJ2"/>
<dbReference type="TreeFam" id="TF300822"/>
<dbReference type="BRENDA" id="2.4.99.18">
    <property type="organism ID" value="2681"/>
</dbReference>
<dbReference type="PathwayCommons" id="Q8TCJ2"/>
<dbReference type="Reactome" id="R-HSA-9926550">
    <property type="pathway name" value="Regulation of MITF-M-dependent genes involved in extracellular matrix, focal adhesion and epithelial-to-mesenchymal transition"/>
</dbReference>
<dbReference type="SignaLink" id="Q8TCJ2"/>
<dbReference type="SIGNOR" id="Q8TCJ2"/>
<dbReference type="UniPathway" id="UPA00378"/>
<dbReference type="BioGRID-ORCS" id="201595">
    <property type="hits" value="123 hits in 1163 CRISPR screens"/>
</dbReference>
<dbReference type="ChiTaRS" id="STT3B">
    <property type="organism name" value="human"/>
</dbReference>
<dbReference type="GeneWiki" id="STT3B"/>
<dbReference type="GenomeRNAi" id="201595"/>
<dbReference type="Pharos" id="Q8TCJ2">
    <property type="development level" value="Tbio"/>
</dbReference>
<dbReference type="PRO" id="PR:Q8TCJ2"/>
<dbReference type="Proteomes" id="UP000005640">
    <property type="component" value="Chromosome 3"/>
</dbReference>
<dbReference type="RNAct" id="Q8TCJ2">
    <property type="molecule type" value="protein"/>
</dbReference>
<dbReference type="Bgee" id="ENSG00000163527">
    <property type="expression patterns" value="Expressed in ileal mucosa and 196 other cell types or tissues"/>
</dbReference>
<dbReference type="GO" id="GO:0005783">
    <property type="term" value="C:endoplasmic reticulum"/>
    <property type="evidence" value="ECO:0000314"/>
    <property type="project" value="HPA"/>
</dbReference>
<dbReference type="GO" id="GO:0005789">
    <property type="term" value="C:endoplasmic reticulum membrane"/>
    <property type="evidence" value="ECO:0000304"/>
    <property type="project" value="Reactome"/>
</dbReference>
<dbReference type="GO" id="GO:0016020">
    <property type="term" value="C:membrane"/>
    <property type="evidence" value="ECO:0007005"/>
    <property type="project" value="UniProtKB"/>
</dbReference>
<dbReference type="GO" id="GO:0008250">
    <property type="term" value="C:oligosaccharyltransferase complex"/>
    <property type="evidence" value="ECO:0000314"/>
    <property type="project" value="ARUK-UCL"/>
</dbReference>
<dbReference type="GO" id="GO:0160227">
    <property type="term" value="C:oligosaccharyltransferase complex B"/>
    <property type="evidence" value="ECO:0000314"/>
    <property type="project" value="UniProtKB"/>
</dbReference>
<dbReference type="GO" id="GO:0032991">
    <property type="term" value="C:protein-containing complex"/>
    <property type="evidence" value="ECO:0000314"/>
    <property type="project" value="MGI"/>
</dbReference>
<dbReference type="GO" id="GO:0004579">
    <property type="term" value="F:dolichyl-diphosphooligosaccharide-protein glycotransferase activity"/>
    <property type="evidence" value="ECO:0000314"/>
    <property type="project" value="UniProtKB"/>
</dbReference>
<dbReference type="GO" id="GO:0046872">
    <property type="term" value="F:metal ion binding"/>
    <property type="evidence" value="ECO:0007669"/>
    <property type="project" value="UniProtKB-KW"/>
</dbReference>
<dbReference type="GO" id="GO:0043686">
    <property type="term" value="P:co-translational protein modification"/>
    <property type="evidence" value="ECO:0000315"/>
    <property type="project" value="UniProtKB"/>
</dbReference>
<dbReference type="GO" id="GO:0036503">
    <property type="term" value="P:ERAD pathway"/>
    <property type="evidence" value="ECO:0000315"/>
    <property type="project" value="UniProtKB"/>
</dbReference>
<dbReference type="GO" id="GO:0006516">
    <property type="term" value="P:glycoprotein catabolic process"/>
    <property type="evidence" value="ECO:0000315"/>
    <property type="project" value="UniProtKB"/>
</dbReference>
<dbReference type="GO" id="GO:0043687">
    <property type="term" value="P:post-translational protein modification"/>
    <property type="evidence" value="ECO:0000314"/>
    <property type="project" value="UniProtKB"/>
</dbReference>
<dbReference type="GO" id="GO:0006487">
    <property type="term" value="P:protein N-linked glycosylation"/>
    <property type="evidence" value="ECO:0000315"/>
    <property type="project" value="ARUK-UCL"/>
</dbReference>
<dbReference type="GO" id="GO:0018279">
    <property type="term" value="P:protein N-linked glycosylation via asparagine"/>
    <property type="evidence" value="ECO:0000314"/>
    <property type="project" value="UniProtKB"/>
</dbReference>
<dbReference type="GO" id="GO:0006986">
    <property type="term" value="P:response to unfolded protein"/>
    <property type="evidence" value="ECO:0000315"/>
    <property type="project" value="UniProtKB"/>
</dbReference>
<dbReference type="FunFam" id="3.40.50.12610:FF:000001">
    <property type="entry name" value="Dolichyl-diphosphooligosaccharide--protein glycosyltransferase subunit STT3B"/>
    <property type="match status" value="1"/>
</dbReference>
<dbReference type="Gene3D" id="3.40.50.12610">
    <property type="match status" value="1"/>
</dbReference>
<dbReference type="InterPro" id="IPR003674">
    <property type="entry name" value="Oligo_trans_STT3"/>
</dbReference>
<dbReference type="InterPro" id="IPR048999">
    <property type="entry name" value="STT3-PglB_core"/>
</dbReference>
<dbReference type="InterPro" id="IPR048307">
    <property type="entry name" value="STT3_N"/>
</dbReference>
<dbReference type="PANTHER" id="PTHR13872">
    <property type="entry name" value="DOLICHYL-DIPHOSPHOOLIGOSACCHARIDE--PROTEIN GLYCOSYLTRANSFERASE SUBUNIT"/>
    <property type="match status" value="1"/>
</dbReference>
<dbReference type="PANTHER" id="PTHR13872:SF1">
    <property type="entry name" value="DOLICHYL-DIPHOSPHOOLIGOSACCHARIDE--PROTEIN GLYCOSYLTRANSFERASE SUBUNIT STT3B"/>
    <property type="match status" value="1"/>
</dbReference>
<dbReference type="Pfam" id="PF02516">
    <property type="entry name" value="STT3"/>
    <property type="match status" value="1"/>
</dbReference>
<dbReference type="Pfam" id="PF21436">
    <property type="entry name" value="STT3-PglB_core"/>
    <property type="match status" value="1"/>
</dbReference>
<feature type="initiator methionine" description="Removed" evidence="23">
    <location>
        <position position="1"/>
    </location>
</feature>
<feature type="chain" id="PRO_0000246001" description="Dolichyl-diphosphooligosaccharide--protein glycosyltransferase subunit STT3B">
    <location>
        <begin position="2"/>
        <end position="826"/>
    </location>
</feature>
<feature type="topological domain" description="Cytoplasmic" evidence="18">
    <location>
        <begin position="2"/>
        <end position="41"/>
    </location>
</feature>
<feature type="transmembrane region" description="Helical" evidence="2">
    <location>
        <begin position="42"/>
        <end position="86"/>
    </location>
</feature>
<feature type="topological domain" description="Lumenal" evidence="18">
    <location>
        <begin position="87"/>
        <end position="173"/>
    </location>
</feature>
<feature type="transmembrane region" description="Helical" evidence="2">
    <location>
        <begin position="174"/>
        <end position="192"/>
    </location>
</feature>
<feature type="topological domain" description="Cytoplasmic" evidence="18">
    <location>
        <begin position="193"/>
        <end position="194"/>
    </location>
</feature>
<feature type="transmembrane region" description="Helical" evidence="2">
    <location>
        <begin position="195"/>
        <end position="212"/>
    </location>
</feature>
<feature type="topological domain" description="Lumenal" evidence="18">
    <location>
        <begin position="213"/>
        <end position="223"/>
    </location>
</feature>
<feature type="transmembrane region" description="Helical" evidence="2">
    <location>
        <begin position="224"/>
        <end position="243"/>
    </location>
</feature>
<feature type="topological domain" description="Cytoplasmic" evidence="18">
    <location>
        <begin position="244"/>
        <end position="245"/>
    </location>
</feature>
<feature type="transmembrane region" description="Helical" evidence="2">
    <location>
        <begin position="246"/>
        <end position="260"/>
    </location>
</feature>
<feature type="topological domain" description="Lumenal" evidence="18">
    <location>
        <begin position="261"/>
        <end position="265"/>
    </location>
</feature>
<feature type="transmembrane region" description="Helical" evidence="2">
    <location>
        <begin position="266"/>
        <end position="282"/>
    </location>
</feature>
<feature type="topological domain" description="Cytoplasmic" evidence="18">
    <location>
        <begin position="283"/>
        <end position="287"/>
    </location>
</feature>
<feature type="transmembrane region" description="Helical" evidence="2">
    <location>
        <begin position="288"/>
        <end position="313"/>
    </location>
</feature>
<feature type="topological domain" description="Lumenal" evidence="18">
    <location>
        <begin position="314"/>
        <end position="321"/>
    </location>
</feature>
<feature type="transmembrane region" description="Helical" evidence="2">
    <location>
        <begin position="322"/>
        <end position="341"/>
    </location>
</feature>
<feature type="topological domain" description="Cytoplasmic" evidence="18">
    <location>
        <begin position="342"/>
        <end position="350"/>
    </location>
</feature>
<feature type="transmembrane region" description="Helical" evidence="5">
    <location>
        <begin position="351"/>
        <end position="371"/>
    </location>
</feature>
<feature type="topological domain" description="Lumenal" evidence="18">
    <location>
        <begin position="372"/>
        <end position="410"/>
    </location>
</feature>
<feature type="transmembrane region" description="Helical" evidence="2">
    <location>
        <begin position="411"/>
        <end position="433"/>
    </location>
</feature>
<feature type="topological domain" description="Cytoplasmic" evidence="18">
    <location>
        <begin position="434"/>
        <end position="439"/>
    </location>
</feature>
<feature type="transmembrane region" description="Helical" evidence="2">
    <location>
        <begin position="440"/>
        <end position="456"/>
    </location>
</feature>
<feature type="topological domain" description="Lumenal" evidence="18">
    <location>
        <begin position="457"/>
        <end position="460"/>
    </location>
</feature>
<feature type="transmembrane region" description="Helical" evidence="2">
    <location>
        <begin position="461"/>
        <end position="482"/>
    </location>
</feature>
<feature type="topological domain" description="Cytoplasmic" evidence="18">
    <location>
        <begin position="483"/>
        <end position="526"/>
    </location>
</feature>
<feature type="transmembrane region" description="Helical" evidence="2">
    <location>
        <begin position="527"/>
        <end position="552"/>
    </location>
</feature>
<feature type="topological domain" description="Lumenal" evidence="18">
    <location>
        <begin position="553"/>
        <end position="826"/>
    </location>
</feature>
<feature type="region of interest" description="Disordered" evidence="7">
    <location>
        <begin position="1"/>
        <end position="60"/>
    </location>
</feature>
<feature type="region of interest" description="Disordered" evidence="7">
    <location>
        <begin position="490"/>
        <end position="509"/>
    </location>
</feature>
<feature type="region of interest" description="Interacts with target acceptor peptide in protein substrate" evidence="1">
    <location>
        <begin position="604"/>
        <end position="606"/>
    </location>
</feature>
<feature type="short sequence motif" description="DXD motif 1" evidence="4">
    <location>
        <begin position="101"/>
        <end position="103"/>
    </location>
</feature>
<feature type="short sequence motif" description="DXD motif 2" evidence="2">
    <location>
        <begin position="221"/>
        <end position="223"/>
    </location>
</feature>
<feature type="short sequence motif" description="SVSE motif" evidence="4">
    <location>
        <begin position="402"/>
        <end position="405"/>
    </location>
</feature>
<feature type="short sequence motif" description="WWDYG motif" evidence="2">
    <location>
        <begin position="604"/>
        <end position="608"/>
    </location>
</feature>
<feature type="short sequence motif" description="DK motif" evidence="2">
    <location>
        <begin position="671"/>
        <end position="678"/>
    </location>
</feature>
<feature type="compositionally biased region" description="Low complexity" evidence="7">
    <location>
        <begin position="37"/>
        <end position="49"/>
    </location>
</feature>
<feature type="binding site" evidence="1">
    <location>
        <position position="103"/>
    </location>
    <ligand>
        <name>Mn(2+)</name>
        <dbReference type="ChEBI" id="CHEBI:29035"/>
    </ligand>
</feature>
<feature type="binding site" evidence="1">
    <location>
        <position position="221"/>
    </location>
    <ligand>
        <name>Mn(2+)</name>
        <dbReference type="ChEBI" id="CHEBI:29035"/>
    </ligand>
</feature>
<feature type="binding site" evidence="1">
    <location>
        <position position="223"/>
    </location>
    <ligand>
        <name>Mn(2+)</name>
        <dbReference type="ChEBI" id="CHEBI:29035"/>
    </ligand>
</feature>
<feature type="binding site" evidence="1">
    <location>
        <position position="459"/>
    </location>
    <ligand>
        <name>dolichyl diphosphooligosaccharide</name>
        <dbReference type="ChEBI" id="CHEBI:57570"/>
    </ligand>
</feature>
<feature type="binding site" evidence="1">
    <location>
        <position position="609"/>
    </location>
    <ligand>
        <name>dolichyl diphosphooligosaccharide</name>
        <dbReference type="ChEBI" id="CHEBI:57570"/>
    </ligand>
</feature>
<feature type="site" description="Interacts with target acceptor peptide in protein substrate" evidence="1">
    <location>
        <position position="103"/>
    </location>
</feature>
<feature type="site" description="Important for catalytic activity" evidence="1">
    <location>
        <position position="214"/>
    </location>
</feature>
<feature type="site" description="Interacts with target acceptor peptide in protein substrate" evidence="1">
    <location>
        <position position="405"/>
    </location>
</feature>
<feature type="site" description="Interacts with target acceptor peptide in protein substrate" evidence="1">
    <location>
        <position position="674"/>
    </location>
</feature>
<feature type="modified residue" description="N-acetylalanine" evidence="23">
    <location>
        <position position="2"/>
    </location>
</feature>
<feature type="modified residue" description="Phosphoserine" evidence="3">
    <location>
        <position position="13"/>
    </location>
</feature>
<feature type="modified residue" description="Phosphoserine" evidence="22 25">
    <location>
        <position position="18"/>
    </location>
</feature>
<feature type="modified residue" description="Phosphoserine" evidence="22 24 26 27">
    <location>
        <position position="29"/>
    </location>
</feature>
<feature type="modified residue" description="Phosphoserine" evidence="21 26 27">
    <location>
        <position position="498"/>
    </location>
</feature>
<feature type="modified residue" description="Phosphoserine" evidence="21 27">
    <location>
        <position position="499"/>
    </location>
</feature>
<feature type="glycosylation site" description="N-linked (GlcNAc...) asparagine" evidence="6">
    <location>
        <position position="616"/>
    </location>
</feature>
<feature type="glycosylation site" description="N-linked (GlcNAc...) asparagine" evidence="9">
    <location>
        <position position="623"/>
    </location>
</feature>
<feature type="glycosylation site" description="N-linked (GlcNAc...) (high mannose) asparagine" evidence="9">
    <location>
        <position position="627"/>
    </location>
</feature>
<feature type="glycosylation site" description="N-linked (GlcNAc...) asparagine" evidence="6">
    <location>
        <position position="641"/>
    </location>
</feature>
<feature type="sequence conflict" description="In Ref. 4; AAH15880." evidence="18" ref="4">
    <original>S</original>
    <variation>F</variation>
    <location>
        <position position="822"/>
    </location>
</feature>
<feature type="helix" evidence="28">
    <location>
        <begin position="65"/>
        <end position="86"/>
    </location>
</feature>
<feature type="turn" evidence="28">
    <location>
        <begin position="90"/>
        <end position="95"/>
    </location>
</feature>
<feature type="helix" evidence="28">
    <location>
        <begin position="104"/>
        <end position="117"/>
    </location>
</feature>
<feature type="helix" evidence="28">
    <location>
        <begin position="119"/>
        <end position="123"/>
    </location>
</feature>
<feature type="strand" evidence="28">
    <location>
        <begin position="129"/>
        <end position="131"/>
    </location>
</feature>
<feature type="turn" evidence="28">
    <location>
        <begin position="132"/>
        <end position="134"/>
    </location>
</feature>
<feature type="strand" evidence="28">
    <location>
        <begin position="136"/>
        <end position="138"/>
    </location>
</feature>
<feature type="helix" evidence="28">
    <location>
        <begin position="146"/>
        <end position="159"/>
    </location>
</feature>
<feature type="helix" evidence="28">
    <location>
        <begin position="166"/>
        <end position="171"/>
    </location>
</feature>
<feature type="helix" evidence="28">
    <location>
        <begin position="173"/>
        <end position="192"/>
    </location>
</feature>
<feature type="helix" evidence="28">
    <location>
        <begin position="195"/>
        <end position="204"/>
    </location>
</feature>
<feature type="helix" evidence="28">
    <location>
        <begin position="209"/>
        <end position="212"/>
    </location>
</feature>
<feature type="helix" evidence="28">
    <location>
        <begin position="213"/>
        <end position="215"/>
    </location>
</feature>
<feature type="helix" evidence="28">
    <location>
        <begin position="223"/>
        <end position="243"/>
    </location>
</feature>
<feature type="helix" evidence="28">
    <location>
        <begin position="246"/>
        <end position="262"/>
    </location>
</feature>
<feature type="helix" evidence="28">
    <location>
        <begin position="266"/>
        <end position="282"/>
    </location>
</feature>
<feature type="helix" evidence="28">
    <location>
        <begin position="288"/>
        <end position="305"/>
    </location>
</feature>
<feature type="turn" evidence="28">
    <location>
        <begin position="309"/>
        <end position="313"/>
    </location>
</feature>
<feature type="helix" evidence="28">
    <location>
        <begin position="314"/>
        <end position="317"/>
    </location>
</feature>
<feature type="strand" evidence="28">
    <location>
        <begin position="318"/>
        <end position="320"/>
    </location>
</feature>
<feature type="helix" evidence="28">
    <location>
        <begin position="322"/>
        <end position="343"/>
    </location>
</feature>
<feature type="turn" evidence="28">
    <location>
        <begin position="347"/>
        <end position="349"/>
    </location>
</feature>
<feature type="helix" evidence="28">
    <location>
        <begin position="350"/>
        <end position="374"/>
    </location>
</feature>
<feature type="strand" evidence="28">
    <location>
        <begin position="375"/>
        <end position="378"/>
    </location>
</feature>
<feature type="helix" evidence="28">
    <location>
        <begin position="382"/>
        <end position="389"/>
    </location>
</feature>
<feature type="helix" evidence="28">
    <location>
        <begin position="392"/>
        <end position="395"/>
    </location>
</feature>
<feature type="helix" evidence="28">
    <location>
        <begin position="398"/>
        <end position="402"/>
    </location>
</feature>
<feature type="helix" evidence="28">
    <location>
        <begin position="411"/>
        <end position="416"/>
    </location>
</feature>
<feature type="helix" evidence="28">
    <location>
        <begin position="421"/>
        <end position="434"/>
    </location>
</feature>
<feature type="helix" evidence="28">
    <location>
        <begin position="438"/>
        <end position="454"/>
    </location>
</feature>
<feature type="helix" evidence="28">
    <location>
        <begin position="461"/>
        <end position="482"/>
    </location>
</feature>
<feature type="helix" evidence="28">
    <location>
        <begin position="534"/>
        <end position="560"/>
    </location>
</feature>
<feature type="strand" evidence="28">
    <location>
        <begin position="566"/>
        <end position="572"/>
    </location>
</feature>
<feature type="strand" evidence="28">
    <location>
        <begin position="578"/>
        <end position="581"/>
    </location>
</feature>
<feature type="helix" evidence="28">
    <location>
        <begin position="583"/>
        <end position="593"/>
    </location>
</feature>
<feature type="strand" evidence="28">
    <location>
        <begin position="600"/>
        <end position="602"/>
    </location>
</feature>
<feature type="helix" evidence="28">
    <location>
        <begin position="605"/>
        <end position="607"/>
    </location>
</feature>
<feature type="helix" evidence="28">
    <location>
        <begin position="608"/>
        <end position="613"/>
    </location>
</feature>
<feature type="strand" evidence="28">
    <location>
        <begin position="618"/>
        <end position="621"/>
    </location>
</feature>
<feature type="helix" evidence="28">
    <location>
        <begin position="628"/>
        <end position="638"/>
    </location>
</feature>
<feature type="helix" evidence="28">
    <location>
        <begin position="642"/>
        <end position="651"/>
    </location>
</feature>
<feature type="strand" evidence="28">
    <location>
        <begin position="656"/>
        <end position="660"/>
    </location>
</feature>
<feature type="turn" evidence="28">
    <location>
        <begin position="663"/>
        <end position="666"/>
    </location>
</feature>
<feature type="turn" evidence="28">
    <location>
        <begin position="671"/>
        <end position="674"/>
    </location>
</feature>
<feature type="helix" evidence="28">
    <location>
        <begin position="675"/>
        <end position="685"/>
    </location>
</feature>
<feature type="turn" evidence="28">
    <location>
        <begin position="687"/>
        <end position="689"/>
    </location>
</feature>
<feature type="helix" evidence="28">
    <location>
        <begin position="692"/>
        <end position="695"/>
    </location>
</feature>
<feature type="turn" evidence="28">
    <location>
        <begin position="710"/>
        <end position="714"/>
    </location>
</feature>
<feature type="helix" evidence="28">
    <location>
        <begin position="716"/>
        <end position="721"/>
    </location>
</feature>
<feature type="strand" evidence="28">
    <location>
        <begin position="731"/>
        <end position="733"/>
    </location>
</feature>
<feature type="turn" evidence="28">
    <location>
        <begin position="740"/>
        <end position="743"/>
    </location>
</feature>
<feature type="strand" evidence="28">
    <location>
        <begin position="754"/>
        <end position="761"/>
    </location>
</feature>
<feature type="strand" evidence="28">
    <location>
        <begin position="767"/>
        <end position="772"/>
    </location>
</feature>
<feature type="strand" evidence="28">
    <location>
        <begin position="789"/>
        <end position="791"/>
    </location>
</feature>
<feature type="strand" evidence="28">
    <location>
        <begin position="808"/>
        <end position="811"/>
    </location>
</feature>
<sequence length="826" mass="93674">MAEPSAPESKHKSSLNSSPWSGLMALGNSRHGHHGPGAQCAHKAAGGAAPPKPAPAGLSGGLSQPAGWQSLLSFTILFLAWLAGFSSRLFAVIRFESIIHEFDPWFNYRSTHHLASHGFYEFLNWFDERAWYPLGRIVGGTVYPGLMITAGLIHWILNTLNITVHIRDVCVFLAPTFSGLTSISTFLLTRELWNQGAGLLAACFIAIVPGYISRSVAGSFDNEGIAIFALQFTYYLWVKSVKTGSVFWTMCCCLSYFYMVSAWGGYVFIINLIPLHVFVLLLMQRYSKRVYIAYSTFYIVGLILSMQIPFVGFQPIRTSEHMAAAGVFALLQAYAFLQYLRDRLTKQEFQTLFFLGVSLAAGAVFLSVIYLTYTGYIAPWSGRFYSLWDTGYAKIHIPIIASVSEHQPTTWVSFFFDLHILVCTFPAGLWFCIKNINDERVFVALYAISAVYFAGVMVRLMLTLTPVVCMLSAIAFSNVFEHYLGDDMKRENPPVEDSSDEDDKRNQGNLYDKAGKVRKHATEQEKTEEGLGPNIKSIVTMLMLMLLMMFAVHCTWVTSNAYSSPSVVLASYNHDGTRNILDDFREAYFWLRQNTDEHARVMSWWDYGYQIAGMANRTTLVDNNTWNNSHIALVGKAMSSNETAAYKIMRTLDVDYVLVIFGGVIGYSGDDINKFLWMVRIAEGEHPKDIRESDYFTPQGEFRVDKAGSPTLLNCLMYKMSYYRFGEMQLDFRTPPGFDRTRNAEIGNKDIKFKHLEEAFTSEHWLVRIYKVKAPDNRETLDHKPRVTNIFPKQKYLSKKTTKRKRGYIKNKLVFKKGKKISKKTV</sequence>
<gene>
    <name evidence="19" type="primary">STT3B</name>
    <name type="synonym">SIMP</name>
</gene>
<reference key="1">
    <citation type="journal article" date="2002" name="Immunogenetics">
        <title>The model B6dom1 minor histocompatibility antigen is encoded by a mouse homolog of the yeast STT3 gene.</title>
        <authorList>
            <person name="McBride K."/>
            <person name="Baron C."/>
            <person name="Picard S."/>
            <person name="Martin S."/>
            <person name="Boismenu D."/>
            <person name="Bell A."/>
            <person name="Bergeron J."/>
            <person name="Perreault C."/>
        </authorList>
    </citation>
    <scope>NUCLEOTIDE SEQUENCE [MRNA]</scope>
</reference>
<reference key="2">
    <citation type="journal article" date="2006" name="Nature">
        <title>The DNA sequence, annotation and analysis of human chromosome 3.</title>
        <authorList>
            <person name="Muzny D.M."/>
            <person name="Scherer S.E."/>
            <person name="Kaul R."/>
            <person name="Wang J."/>
            <person name="Yu J."/>
            <person name="Sudbrak R."/>
            <person name="Buhay C.J."/>
            <person name="Chen R."/>
            <person name="Cree A."/>
            <person name="Ding Y."/>
            <person name="Dugan-Rocha S."/>
            <person name="Gill R."/>
            <person name="Gunaratne P."/>
            <person name="Harris R.A."/>
            <person name="Hawes A.C."/>
            <person name="Hernandez J."/>
            <person name="Hodgson A.V."/>
            <person name="Hume J."/>
            <person name="Jackson A."/>
            <person name="Khan Z.M."/>
            <person name="Kovar-Smith C."/>
            <person name="Lewis L.R."/>
            <person name="Lozado R.J."/>
            <person name="Metzker M.L."/>
            <person name="Milosavljevic A."/>
            <person name="Miner G.R."/>
            <person name="Morgan M.B."/>
            <person name="Nazareth L.V."/>
            <person name="Scott G."/>
            <person name="Sodergren E."/>
            <person name="Song X.-Z."/>
            <person name="Steffen D."/>
            <person name="Wei S."/>
            <person name="Wheeler D.A."/>
            <person name="Wright M.W."/>
            <person name="Worley K.C."/>
            <person name="Yuan Y."/>
            <person name="Zhang Z."/>
            <person name="Adams C.Q."/>
            <person name="Ansari-Lari M.A."/>
            <person name="Ayele M."/>
            <person name="Brown M.J."/>
            <person name="Chen G."/>
            <person name="Chen Z."/>
            <person name="Clendenning J."/>
            <person name="Clerc-Blankenburg K.P."/>
            <person name="Chen R."/>
            <person name="Chen Z."/>
            <person name="Davis C."/>
            <person name="Delgado O."/>
            <person name="Dinh H.H."/>
            <person name="Dong W."/>
            <person name="Draper H."/>
            <person name="Ernst S."/>
            <person name="Fu G."/>
            <person name="Gonzalez-Garay M.L."/>
            <person name="Garcia D.K."/>
            <person name="Gillett W."/>
            <person name="Gu J."/>
            <person name="Hao B."/>
            <person name="Haugen E."/>
            <person name="Havlak P."/>
            <person name="He X."/>
            <person name="Hennig S."/>
            <person name="Hu S."/>
            <person name="Huang W."/>
            <person name="Jackson L.R."/>
            <person name="Jacob L.S."/>
            <person name="Kelly S.H."/>
            <person name="Kube M."/>
            <person name="Levy R."/>
            <person name="Li Z."/>
            <person name="Liu B."/>
            <person name="Liu J."/>
            <person name="Liu W."/>
            <person name="Lu J."/>
            <person name="Maheshwari M."/>
            <person name="Nguyen B.-V."/>
            <person name="Okwuonu G.O."/>
            <person name="Palmeiri A."/>
            <person name="Pasternak S."/>
            <person name="Perez L.M."/>
            <person name="Phelps K.A."/>
            <person name="Plopper F.J."/>
            <person name="Qiang B."/>
            <person name="Raymond C."/>
            <person name="Rodriguez R."/>
            <person name="Saenphimmachak C."/>
            <person name="Santibanez J."/>
            <person name="Shen H."/>
            <person name="Shen Y."/>
            <person name="Subramanian S."/>
            <person name="Tabor P.E."/>
            <person name="Verduzco D."/>
            <person name="Waldron L."/>
            <person name="Wang J."/>
            <person name="Wang J."/>
            <person name="Wang Q."/>
            <person name="Williams G.A."/>
            <person name="Wong G.K.-S."/>
            <person name="Yao Z."/>
            <person name="Zhang J."/>
            <person name="Zhang X."/>
            <person name="Zhao G."/>
            <person name="Zhou J."/>
            <person name="Zhou Y."/>
            <person name="Nelson D."/>
            <person name="Lehrach H."/>
            <person name="Reinhardt R."/>
            <person name="Naylor S.L."/>
            <person name="Yang H."/>
            <person name="Olson M."/>
            <person name="Weinstock G."/>
            <person name="Gibbs R.A."/>
        </authorList>
    </citation>
    <scope>NUCLEOTIDE SEQUENCE [LARGE SCALE GENOMIC DNA]</scope>
</reference>
<reference key="3">
    <citation type="journal article" date="2004" name="Nat. Genet.">
        <title>Complete sequencing and characterization of 21,243 full-length human cDNAs.</title>
        <authorList>
            <person name="Ota T."/>
            <person name="Suzuki Y."/>
            <person name="Nishikawa T."/>
            <person name="Otsuki T."/>
            <person name="Sugiyama T."/>
            <person name="Irie R."/>
            <person name="Wakamatsu A."/>
            <person name="Hayashi K."/>
            <person name="Sato H."/>
            <person name="Nagai K."/>
            <person name="Kimura K."/>
            <person name="Makita H."/>
            <person name="Sekine M."/>
            <person name="Obayashi M."/>
            <person name="Nishi T."/>
            <person name="Shibahara T."/>
            <person name="Tanaka T."/>
            <person name="Ishii S."/>
            <person name="Yamamoto J."/>
            <person name="Saito K."/>
            <person name="Kawai Y."/>
            <person name="Isono Y."/>
            <person name="Nakamura Y."/>
            <person name="Nagahari K."/>
            <person name="Murakami K."/>
            <person name="Yasuda T."/>
            <person name="Iwayanagi T."/>
            <person name="Wagatsuma M."/>
            <person name="Shiratori A."/>
            <person name="Sudo H."/>
            <person name="Hosoiri T."/>
            <person name="Kaku Y."/>
            <person name="Kodaira H."/>
            <person name="Kondo H."/>
            <person name="Sugawara M."/>
            <person name="Takahashi M."/>
            <person name="Kanda K."/>
            <person name="Yokoi T."/>
            <person name="Furuya T."/>
            <person name="Kikkawa E."/>
            <person name="Omura Y."/>
            <person name="Abe K."/>
            <person name="Kamihara K."/>
            <person name="Katsuta N."/>
            <person name="Sato K."/>
            <person name="Tanikawa M."/>
            <person name="Yamazaki M."/>
            <person name="Ninomiya K."/>
            <person name="Ishibashi T."/>
            <person name="Yamashita H."/>
            <person name="Murakawa K."/>
            <person name="Fujimori K."/>
            <person name="Tanai H."/>
            <person name="Kimata M."/>
            <person name="Watanabe M."/>
            <person name="Hiraoka S."/>
            <person name="Chiba Y."/>
            <person name="Ishida S."/>
            <person name="Ono Y."/>
            <person name="Takiguchi S."/>
            <person name="Watanabe S."/>
            <person name="Yosida M."/>
            <person name="Hotuta T."/>
            <person name="Kusano J."/>
            <person name="Kanehori K."/>
            <person name="Takahashi-Fujii A."/>
            <person name="Hara H."/>
            <person name="Tanase T.-O."/>
            <person name="Nomura Y."/>
            <person name="Togiya S."/>
            <person name="Komai F."/>
            <person name="Hara R."/>
            <person name="Takeuchi K."/>
            <person name="Arita M."/>
            <person name="Imose N."/>
            <person name="Musashino K."/>
            <person name="Yuuki H."/>
            <person name="Oshima A."/>
            <person name="Sasaki N."/>
            <person name="Aotsuka S."/>
            <person name="Yoshikawa Y."/>
            <person name="Matsunawa H."/>
            <person name="Ichihara T."/>
            <person name="Shiohata N."/>
            <person name="Sano S."/>
            <person name="Moriya S."/>
            <person name="Momiyama H."/>
            <person name="Satoh N."/>
            <person name="Takami S."/>
            <person name="Terashima Y."/>
            <person name="Suzuki O."/>
            <person name="Nakagawa S."/>
            <person name="Senoh A."/>
            <person name="Mizoguchi H."/>
            <person name="Goto Y."/>
            <person name="Shimizu F."/>
            <person name="Wakebe H."/>
            <person name="Hishigaki H."/>
            <person name="Watanabe T."/>
            <person name="Sugiyama A."/>
            <person name="Takemoto M."/>
            <person name="Kawakami B."/>
            <person name="Yamazaki M."/>
            <person name="Watanabe K."/>
            <person name="Kumagai A."/>
            <person name="Itakura S."/>
            <person name="Fukuzumi Y."/>
            <person name="Fujimori Y."/>
            <person name="Komiyama M."/>
            <person name="Tashiro H."/>
            <person name="Tanigami A."/>
            <person name="Fujiwara T."/>
            <person name="Ono T."/>
            <person name="Yamada K."/>
            <person name="Fujii Y."/>
            <person name="Ozaki K."/>
            <person name="Hirao M."/>
            <person name="Ohmori Y."/>
            <person name="Kawabata A."/>
            <person name="Hikiji T."/>
            <person name="Kobatake N."/>
            <person name="Inagaki H."/>
            <person name="Ikema Y."/>
            <person name="Okamoto S."/>
            <person name="Okitani R."/>
            <person name="Kawakami T."/>
            <person name="Noguchi S."/>
            <person name="Itoh T."/>
            <person name="Shigeta K."/>
            <person name="Senba T."/>
            <person name="Matsumura K."/>
            <person name="Nakajima Y."/>
            <person name="Mizuno T."/>
            <person name="Morinaga M."/>
            <person name="Sasaki M."/>
            <person name="Togashi T."/>
            <person name="Oyama M."/>
            <person name="Hata H."/>
            <person name="Watanabe M."/>
            <person name="Komatsu T."/>
            <person name="Mizushima-Sugano J."/>
            <person name="Satoh T."/>
            <person name="Shirai Y."/>
            <person name="Takahashi Y."/>
            <person name="Nakagawa K."/>
            <person name="Okumura K."/>
            <person name="Nagase T."/>
            <person name="Nomura N."/>
            <person name="Kikuchi H."/>
            <person name="Masuho Y."/>
            <person name="Yamashita R."/>
            <person name="Nakai K."/>
            <person name="Yada T."/>
            <person name="Nakamura Y."/>
            <person name="Ohara O."/>
            <person name="Isogai T."/>
            <person name="Sugano S."/>
        </authorList>
    </citation>
    <scope>NUCLEOTIDE SEQUENCE [LARGE SCALE MRNA] OF 510-826</scope>
    <source>
        <tissue>Placenta</tissue>
    </source>
</reference>
<reference key="4">
    <citation type="journal article" date="2004" name="Genome Res.">
        <title>The status, quality, and expansion of the NIH full-length cDNA project: the Mammalian Gene Collection (MGC).</title>
        <authorList>
            <consortium name="The MGC Project Team"/>
        </authorList>
    </citation>
    <scope>NUCLEOTIDE SEQUENCE [LARGE SCALE MRNA] OF 576-826</scope>
    <source>
        <tissue>Placenta</tissue>
    </source>
</reference>
<reference key="5">
    <citation type="journal article" date="2003" name="Mol. Cell">
        <title>Oligosaccharyltransferase isoforms that contain different catalytic STT3 subunits have distinct enzymatic properties.</title>
        <authorList>
            <person name="Kelleher D.J."/>
            <person name="Karaoglu D."/>
            <person name="Mandon E.C."/>
            <person name="Gilmore R."/>
        </authorList>
    </citation>
    <scope>TISSUE SPECIFICITY</scope>
    <scope>SUBCELLULAR LOCATION</scope>
</reference>
<reference key="6">
    <citation type="journal article" date="2006" name="Cell">
        <title>Global, in vivo, and site-specific phosphorylation dynamics in signaling networks.</title>
        <authorList>
            <person name="Olsen J.V."/>
            <person name="Blagoev B."/>
            <person name="Gnad F."/>
            <person name="Macek B."/>
            <person name="Kumar C."/>
            <person name="Mortensen P."/>
            <person name="Mann M."/>
        </authorList>
    </citation>
    <scope>PHOSPHORYLATION [LARGE SCALE ANALYSIS] AT SER-498 AND SER-499</scope>
    <scope>IDENTIFICATION BY MASS SPECTROMETRY [LARGE SCALE ANALYSIS]</scope>
    <source>
        <tissue>Cervix carcinoma</tissue>
    </source>
</reference>
<reference key="7">
    <citation type="journal article" date="2008" name="Proc. Natl. Acad. Sci. U.S.A.">
        <title>A quantitative atlas of mitotic phosphorylation.</title>
        <authorList>
            <person name="Dephoure N."/>
            <person name="Zhou C."/>
            <person name="Villen J."/>
            <person name="Beausoleil S.A."/>
            <person name="Bakalarski C.E."/>
            <person name="Elledge S.J."/>
            <person name="Gygi S.P."/>
        </authorList>
    </citation>
    <scope>PHOSPHORYLATION [LARGE SCALE ANALYSIS] AT SER-18 AND SER-29</scope>
    <scope>IDENTIFICATION BY MASS SPECTROMETRY [LARGE SCALE ANALYSIS]</scope>
    <source>
        <tissue>Cervix carcinoma</tissue>
    </source>
</reference>
<reference key="8">
    <citation type="journal article" date="2009" name="Anal. Chem.">
        <title>Lys-N and trypsin cover complementary parts of the phosphoproteome in a refined SCX-based approach.</title>
        <authorList>
            <person name="Gauci S."/>
            <person name="Helbig A.O."/>
            <person name="Slijper M."/>
            <person name="Krijgsveld J."/>
            <person name="Heck A.J."/>
            <person name="Mohammed S."/>
        </authorList>
    </citation>
    <scope>ACETYLATION [LARGE SCALE ANALYSIS] AT ALA-2</scope>
    <scope>CLEAVAGE OF INITIATOR METHIONINE [LARGE SCALE ANALYSIS]</scope>
    <scope>IDENTIFICATION BY MASS SPECTROMETRY [LARGE SCALE ANALYSIS]</scope>
</reference>
<reference key="9">
    <citation type="journal article" date="2009" name="Cell">
        <title>Cotranslational and posttranslational N-glycosylation of polypeptides by distinct mammalian OST isoforms.</title>
        <authorList>
            <person name="Ruiz-Canada C."/>
            <person name="Kelleher D.J."/>
            <person name="Gilmore R."/>
        </authorList>
    </citation>
    <scope>FUNCTION</scope>
    <scope>CATALYTIC ACTIVITY</scope>
    <scope>PATHWAY</scope>
</reference>
<reference key="10">
    <citation type="journal article" date="2009" name="J. Proteome Res.">
        <title>Glycoproteomics analysis of human liver tissue by combination of multiple enzyme digestion and hydrazide chemistry.</title>
        <authorList>
            <person name="Chen R."/>
            <person name="Jiang X."/>
            <person name="Sun D."/>
            <person name="Han G."/>
            <person name="Wang F."/>
            <person name="Ye M."/>
            <person name="Wang L."/>
            <person name="Zou H."/>
        </authorList>
    </citation>
    <scope>GLYCOSYLATION [LARGE SCALE ANALYSIS] AT ASN-623 AND ASN-627</scope>
    <source>
        <tissue>Liver</tissue>
    </source>
</reference>
<reference key="11">
    <citation type="journal article" date="2009" name="Sci. Signal.">
        <title>Quantitative phosphoproteomic analysis of T cell receptor signaling reveals system-wide modulation of protein-protein interactions.</title>
        <authorList>
            <person name="Mayya V."/>
            <person name="Lundgren D.H."/>
            <person name="Hwang S.-I."/>
            <person name="Rezaul K."/>
            <person name="Wu L."/>
            <person name="Eng J.K."/>
            <person name="Rodionov V."/>
            <person name="Han D.K."/>
        </authorList>
    </citation>
    <scope>PHOSPHORYLATION [LARGE SCALE ANALYSIS] AT SER-29</scope>
    <scope>IDENTIFICATION BY MASS SPECTROMETRY [LARGE SCALE ANALYSIS]</scope>
    <source>
        <tissue>Leukemic T-cell</tissue>
    </source>
</reference>
<reference key="12">
    <citation type="journal article" date="2010" name="Sci. Signal.">
        <title>Quantitative phosphoproteomics reveals widespread full phosphorylation site occupancy during mitosis.</title>
        <authorList>
            <person name="Olsen J.V."/>
            <person name="Vermeulen M."/>
            <person name="Santamaria A."/>
            <person name="Kumar C."/>
            <person name="Miller M.L."/>
            <person name="Jensen L.J."/>
            <person name="Gnad F."/>
            <person name="Cox J."/>
            <person name="Jensen T.S."/>
            <person name="Nigg E.A."/>
            <person name="Brunak S."/>
            <person name="Mann M."/>
        </authorList>
    </citation>
    <scope>PHOSPHORYLATION [LARGE SCALE ANALYSIS] AT SER-18</scope>
    <scope>IDENTIFICATION BY MASS SPECTROMETRY [LARGE SCALE ANALYSIS]</scope>
    <source>
        <tissue>Cervix carcinoma</tissue>
    </source>
</reference>
<reference key="13">
    <citation type="journal article" date="2011" name="BMC Syst. Biol.">
        <title>Initial characterization of the human central proteome.</title>
        <authorList>
            <person name="Burkard T.R."/>
            <person name="Planyavsky M."/>
            <person name="Kaupe I."/>
            <person name="Breitwieser F.P."/>
            <person name="Buerckstuemmer T."/>
            <person name="Bennett K.L."/>
            <person name="Superti-Furga G."/>
            <person name="Colinge J."/>
        </authorList>
    </citation>
    <scope>IDENTIFICATION BY MASS SPECTROMETRY [LARGE SCALE ANALYSIS]</scope>
</reference>
<reference key="14">
    <citation type="journal article" date="2011" name="Sci. Signal.">
        <title>System-wide temporal characterization of the proteome and phosphoproteome of human embryonic stem cell differentiation.</title>
        <authorList>
            <person name="Rigbolt K.T."/>
            <person name="Prokhorova T.A."/>
            <person name="Akimov V."/>
            <person name="Henningsen J."/>
            <person name="Johansen P.T."/>
            <person name="Kratchmarova I."/>
            <person name="Kassem M."/>
            <person name="Mann M."/>
            <person name="Olsen J.V."/>
            <person name="Blagoev B."/>
        </authorList>
    </citation>
    <scope>PHOSPHORYLATION [LARGE SCALE ANALYSIS] AT SER-29 AND SER-498</scope>
    <scope>IDENTIFICATION BY MASS SPECTROMETRY [LARGE SCALE ANALYSIS]</scope>
</reference>
<reference key="15">
    <citation type="journal article" date="2012" name="Mol. Cell">
        <title>STT3B-dependent posttranslational N-glycosylation as a surveillance system for secretory protein.</title>
        <authorList>
            <person name="Sato T."/>
            <person name="Sako Y."/>
            <person name="Sho M."/>
            <person name="Momohara M."/>
            <person name="Suico M.A."/>
            <person name="Shuto T."/>
            <person name="Nishitoh H."/>
            <person name="Okiyoneda T."/>
            <person name="Kokame K."/>
            <person name="Kaneko M."/>
            <person name="Taura M."/>
            <person name="Miyata M."/>
            <person name="Chosa K."/>
            <person name="Koga T."/>
            <person name="Morino-Koga S."/>
            <person name="Wada I."/>
            <person name="Kai H."/>
        </authorList>
    </citation>
    <scope>FUNCTION IN ERAD PATHWAY</scope>
    <scope>CATALYTIC ACTIVITY</scope>
    <scope>PATHWAY</scope>
</reference>
<reference key="16">
    <citation type="journal article" date="2013" name="Hum. Mol. Genet.">
        <title>Mutations in STT3A and STT3B cause two congenital disorders of glycosylation.</title>
        <authorList>
            <person name="Shrimal S."/>
            <person name="Ng B.G."/>
            <person name="Losfeld M.E."/>
            <person name="Gilmore R."/>
            <person name="Freeze H.H."/>
        </authorList>
    </citation>
    <scope>INVOLVEMENT IN CDG1X</scope>
</reference>
<reference key="17">
    <citation type="journal article" date="2013" name="J. Proteome Res.">
        <title>Toward a comprehensive characterization of a human cancer cell phosphoproteome.</title>
        <authorList>
            <person name="Zhou H."/>
            <person name="Di Palma S."/>
            <person name="Preisinger C."/>
            <person name="Peng M."/>
            <person name="Polat A.N."/>
            <person name="Heck A.J."/>
            <person name="Mohammed S."/>
        </authorList>
    </citation>
    <scope>PHOSPHORYLATION [LARGE SCALE ANALYSIS] AT SER-29; SER-498 AND SER-499</scope>
    <scope>IDENTIFICATION BY MASS SPECTROMETRY [LARGE SCALE ANALYSIS]</scope>
    <source>
        <tissue>Cervix carcinoma</tissue>
        <tissue>Erythroleukemia</tissue>
    </source>
</reference>
<reference key="18">
    <citation type="journal article" date="2014" name="J. Cell Biol.">
        <title>Oxidoreductase activity is necessary for N-glycosylation of cysteine-proximal acceptor sites in glycoproteins.</title>
        <authorList>
            <person name="Cherepanova N.A."/>
            <person name="Shrimal S."/>
            <person name="Gilmore R."/>
        </authorList>
    </citation>
    <scope>IDENTIFICATION IN THE OLIGOSACCHARYLTRANSFERASE COMPLEX</scope>
</reference>
<reference key="19">
    <citation type="journal article" date="2013" name="J. Cell Sci.">
        <title>OST4 is a subunit of the mammalian oligosaccharyltransferase required for efficient N-glycosylation.</title>
        <authorList>
            <person name="Dumax-Vorzet A."/>
            <person name="Roboti P."/>
            <person name="High S."/>
        </authorList>
    </citation>
    <scope>IDENTIFICATION IN THE OLIGOSACCHARYLTRANSFERASE COMPLEX</scope>
</reference>
<reference key="20">
    <citation type="journal article" date="2015" name="Proteomics">
        <title>N-terminome analysis of the human mitochondrial proteome.</title>
        <authorList>
            <person name="Vaca Jacome A.S."/>
            <person name="Rabilloud T."/>
            <person name="Schaeffer-Reiss C."/>
            <person name="Rompais M."/>
            <person name="Ayoub D."/>
            <person name="Lane L."/>
            <person name="Bairoch A."/>
            <person name="Van Dorsselaer A."/>
            <person name="Carapito C."/>
        </authorList>
    </citation>
    <scope>IDENTIFICATION BY MASS SPECTROMETRY [LARGE SCALE ANALYSIS]</scope>
</reference>
<reference key="21">
    <citation type="journal article" date="2019" name="J. Cell Biol.">
        <title>Quantitative glycoproteomics reveals new classes of STT3A- and STT3B-dependent N-glycosylation sites.</title>
        <authorList>
            <person name="Cherepanova N.A."/>
            <person name="Venev S.V."/>
            <person name="Leszyk J.D."/>
            <person name="Shaffer S.A."/>
            <person name="Gilmore R."/>
        </authorList>
    </citation>
    <scope>FUNCTION</scope>
    <scope>CATALYTIC ACTIVITY</scope>
    <scope>PATHWAY</scope>
</reference>
<reference key="22">
    <citation type="journal article" date="2024" name="Science">
        <title>Regulated N-glycosylation controls chaperone function and receptor trafficking.</title>
        <authorList>
            <person name="Ma M."/>
            <person name="Dubey R."/>
            <person name="Jen A."/>
            <person name="Pusapati G.V."/>
            <person name="Singal B."/>
            <person name="Shishkova E."/>
            <person name="Overmyer K.A."/>
            <person name="Cormier-Daire V."/>
            <person name="Fedry J."/>
            <person name="Aravind L."/>
            <person name="Coon J.J."/>
            <person name="Rohatgi R."/>
        </authorList>
    </citation>
    <scope>FUNCTION</scope>
    <scope>PATHWAY</scope>
</reference>
<reference evidence="20" key="23">
    <citation type="journal article" date="2019" name="Science">
        <title>Cryo-electron microscopy structures of human oligosaccharyltransferase complexes OST-A and OST-B.</title>
        <authorList>
            <person name="Ramirez A.S."/>
            <person name="Kowal J."/>
            <person name="Locher K.P."/>
        </authorList>
    </citation>
    <scope>STRUCTURE BY ELECTRON MICROSCOPY (3.50 ANGSTROMS)</scope>
    <scope>IDENTIFICATION OF THE OLIGOSACCHARYLTRANSFERASE (OST) COMPLEX</scope>
    <scope>FUNCTION</scope>
    <scope>COFACTOR</scope>
    <scope>PATHWAY</scope>
</reference>
<comment type="function">
    <text evidence="10 11 15 16 17">Catalytic subunit of the oligosaccharyl transferase (OST) complex that catalyzes the initial transfer of a defined glycan (Glc(3)Man(9)GlcNAc(2) in eukaryotes) from the lipid carrier dolichol-pyrophosphate to an asparagine residue within an Asn-X-Ser/Thr consensus motif in nascent polypeptide chains, the first step in protein N-glycosylation (PubMed:19167329, PubMed:31296534, PubMed:31831667, PubMed:39509507). N-glycosylation occurs cotranslationally and the complex associates with the Sec61 complex at the channel-forming translocon complex that mediates protein translocation across the endoplasmic reticulum (ER) (PubMed:19167329, PubMed:31296534, PubMed:31831667, PubMed:39509507). All subunits are required for a maximal enzyme activity. This subunit contains the active site and the acceptor peptide and donor lipid-linked oligosaccharide (LLO) binding pockets (PubMed:19167329, PubMed:31296534, PubMed:31831667, PubMed:39509507). STT3B is present in a small subset of OST complexes (OST-B) and mediates both cotranslational and post-translational N-glycosylation of target proteins: STT3B-containing complexes are required for efficient post-translational glycosylation and while they are less competent than STT3A-containing complexes for cotranslational glycosylation, they have the ability to mediate glycosylation of some nascent sites that are not accessible for STT3A (PubMed:19167329, PubMed:22607976, PubMed:31296534, PubMed:39509507). STT3B-containing complexes also act post-translationally and mediate modification of skipped glycosylation sites in unfolded proteins (PubMed:19167329, PubMed:22607976, PubMed:39509507). Plays a role in ER-associated degradation (ERAD) pathway that mediates ubiquitin-dependent degradation of misfolded endoplasmic reticulum proteins by mediating N-glycosylation of unfolded proteins, which are then recognized by the ERAD pathway and targeted for degradation (PubMed:19167329, PubMed:22607976). Mediates glycosylation of the disease variant AMYL-TTR 'Asp-38' of TTR at 'Asn-118', leading to its degradation (PubMed:19167329, PubMed:22607976).</text>
</comment>
<comment type="catalytic activity">
    <reaction evidence="10 11 15">
        <text>a di-trans,poly-cis-dolichyl diphosphooligosaccharide + L-asparaginyl-[protein] = N(4)-(oligosaccharide-(1-&gt;4)-N-acetyl-beta-D-glucosaminyl-(1-&gt;4)-N-acetyl-beta-D-glucosaminyl)-L-asparaginyl-[protein] + a di-trans,poly-cis-dolichyl diphosphate + H(+)</text>
        <dbReference type="Rhea" id="RHEA:22980"/>
        <dbReference type="Rhea" id="RHEA-COMP:12804"/>
        <dbReference type="Rhea" id="RHEA-COMP:12805"/>
        <dbReference type="Rhea" id="RHEA-COMP:19506"/>
        <dbReference type="Rhea" id="RHEA-COMP:19509"/>
        <dbReference type="ChEBI" id="CHEBI:15378"/>
        <dbReference type="ChEBI" id="CHEBI:50347"/>
        <dbReference type="ChEBI" id="CHEBI:57497"/>
        <dbReference type="ChEBI" id="CHEBI:57570"/>
        <dbReference type="ChEBI" id="CHEBI:132529"/>
        <dbReference type="EC" id="2.4.99.18"/>
    </reaction>
</comment>
<comment type="cofactor">
    <cofactor evidence="16">
        <name>Mg(2+)</name>
        <dbReference type="ChEBI" id="CHEBI:18420"/>
    </cofactor>
    <cofactor evidence="1">
        <name>Mn(2+)</name>
        <dbReference type="ChEBI" id="CHEBI:29035"/>
    </cofactor>
</comment>
<comment type="pathway">
    <text evidence="10 11 15 16 17">Protein modification; protein glycosylation.</text>
</comment>
<comment type="subunit">
    <text evidence="12 14 16">Component of the oligosaccharyltransferase (OST) complex (PubMed:23606741, PubMed:25135935, PubMed:31831667). There are 2 OST complexes, OST-A and OST-B, which contain STT3A or STT3B as catalytic subunit, respectively (PubMed:23606741, PubMed:25135935, PubMed:31831667). OST-A and OST-B contain common core subunits RPN1, RPN2, OST48, OST4, DAD1 and TMEM258, and OST-B contains either MAGT1 or TUSC3 as specific accessory subunit (PubMed:23606741, PubMed:25135935, PubMed:31831667).</text>
</comment>
<comment type="interaction">
    <interactant intactId="EBI-2256290">
        <id>Q8TCJ2</id>
    </interactant>
    <interactant intactId="EBI-6509505">
        <id>Q0VD86</id>
        <label>INCA1</label>
    </interactant>
    <organismsDiffer>false</organismsDiffer>
    <experiments>3</experiments>
</comment>
<comment type="interaction">
    <interactant intactId="EBI-2256290">
        <id>Q8TCJ2</id>
    </interactant>
    <interactant intactId="EBI-355963">
        <id>P04843</id>
        <label>RPN1</label>
    </interactant>
    <organismsDiffer>false</organismsDiffer>
    <experiments>4</experiments>
</comment>
<comment type="subcellular location">
    <subcellularLocation>
        <location evidence="8">Endoplasmic reticulum</location>
    </subcellularLocation>
    <subcellularLocation>
        <location>Endoplasmic reticulum membrane</location>
        <topology evidence="2">Multi-pass membrane protein</topology>
    </subcellularLocation>
</comment>
<comment type="tissue specificity">
    <text evidence="8">Expressed in heart, brain, placenta, lung, liver, muscle, kidney and pancreas. Expressed in skin fibroblasts (at protein level).</text>
</comment>
<comment type="domain">
    <text evidence="2">Despite low primary sequence conservation between eukaryotic catalytic subunits and bacterial and archaeal single subunit OSTs (ssOST), structural comparison revealed several common motifs at spatially equivalent positions, like the DXD motif 1 on the external loop 1 and the DXD motif 2 on the external loop 2 involved in binding of the metal ion cofactor and the carboxamide group of the acceptor asparagine, the conserved Glu residue of the TIXE/SVSE motif on the external loop 5 involved in catalysis, as well as the WWDYG and the DK/MI motifs in the globular domain that define the binding pocket for the +2 Ser/Thr of the acceptor sequon. In bacterial ssOSTs, an Arg residue was found to interact with a negatively charged side chain at the -2 position of the sequon. This Arg is conserved in bacterial enzymes and correlates with an extended sequon requirement (Asp-X-Asn-X-Ser/Thr) for bacterial N-glycosylation.</text>
</comment>
<comment type="disease" evidence="13">
    <disease id="DI-04007">
        <name>Congenital disorder of glycosylation 1X</name>
        <acronym>CDG1X</acronym>
        <description>A form of congenital disorder of glycosylation, a multisystem disorder caused by a defect in glycoprotein biosynthesis and characterized by under-glycosylated serum glycoproteins. Congenital disorders of glycosylation result in a wide variety of clinical features, such as defects in the nervous system development, psychomotor retardation, dysmorphic features, hypotonia, coagulation disorders, and immunodeficiency. The broad spectrum of features reflects the critical role of N-glycoproteins during embryonic development, differentiation, and maintenance of cell functions.</description>
        <dbReference type="MIM" id="615597"/>
    </disease>
    <text>The disease is caused by variants affecting the gene represented in this entry.</text>
</comment>
<comment type="similarity">
    <text evidence="18">Belongs to the STT3 family.</text>
</comment>
<comment type="sequence caution" evidence="18">
    <conflict type="erroneous initiation">
        <sequence resource="EMBL-CDS" id="AAH15880"/>
    </conflict>
    <text>Truncated N-terminus.</text>
</comment>
<comment type="sequence caution" evidence="18">
    <conflict type="erroneous initiation">
        <sequence resource="EMBL-CDS" id="BAB55370"/>
    </conflict>
    <text>Truncated N-terminus.</text>
</comment>
<comment type="sequence caution" evidence="18">
    <conflict type="erroneous initiation">
        <sequence resource="EMBL-CDS" id="BAC11581"/>
    </conflict>
    <text>Truncated N-terminus.</text>
</comment>
<proteinExistence type="evidence at protein level"/>
<accession>Q8TCJ2</accession>
<accession>Q96JZ4</accession>
<accession>Q96KY7</accession>
<evidence type="ECO:0000250" key="1">
    <source>
        <dbReference type="UniProtKB" id="B9KDD4"/>
    </source>
</evidence>
<evidence type="ECO:0000250" key="2">
    <source>
        <dbReference type="UniProtKB" id="P39007"/>
    </source>
</evidence>
<evidence type="ECO:0000250" key="3">
    <source>
        <dbReference type="UniProtKB" id="Q3TDQ1"/>
    </source>
</evidence>
<evidence type="ECO:0000250" key="4">
    <source>
        <dbReference type="UniProtKB" id="Q5HTX9"/>
    </source>
</evidence>
<evidence type="ECO:0000255" key="5"/>
<evidence type="ECO:0000255" key="6">
    <source>
        <dbReference type="PROSITE-ProRule" id="PRU00498"/>
    </source>
</evidence>
<evidence type="ECO:0000256" key="7">
    <source>
        <dbReference type="SAM" id="MobiDB-lite"/>
    </source>
</evidence>
<evidence type="ECO:0000269" key="8">
    <source>
    </source>
</evidence>
<evidence type="ECO:0000269" key="9">
    <source>
    </source>
</evidence>
<evidence type="ECO:0000269" key="10">
    <source>
    </source>
</evidence>
<evidence type="ECO:0000269" key="11">
    <source>
    </source>
</evidence>
<evidence type="ECO:0000269" key="12">
    <source>
    </source>
</evidence>
<evidence type="ECO:0000269" key="13">
    <source>
    </source>
</evidence>
<evidence type="ECO:0000269" key="14">
    <source>
    </source>
</evidence>
<evidence type="ECO:0000269" key="15">
    <source>
    </source>
</evidence>
<evidence type="ECO:0000269" key="16">
    <source>
    </source>
</evidence>
<evidence type="ECO:0000269" key="17">
    <source>
    </source>
</evidence>
<evidence type="ECO:0000305" key="18"/>
<evidence type="ECO:0000312" key="19">
    <source>
        <dbReference type="HGNC" id="HGNC:30611"/>
    </source>
</evidence>
<evidence type="ECO:0007744" key="20">
    <source>
        <dbReference type="PDB" id="6S7T"/>
    </source>
</evidence>
<evidence type="ECO:0007744" key="21">
    <source>
    </source>
</evidence>
<evidence type="ECO:0007744" key="22">
    <source>
    </source>
</evidence>
<evidence type="ECO:0007744" key="23">
    <source>
    </source>
</evidence>
<evidence type="ECO:0007744" key="24">
    <source>
    </source>
</evidence>
<evidence type="ECO:0007744" key="25">
    <source>
    </source>
</evidence>
<evidence type="ECO:0007744" key="26">
    <source>
    </source>
</evidence>
<evidence type="ECO:0007744" key="27">
    <source>
    </source>
</evidence>
<evidence type="ECO:0007829" key="28">
    <source>
        <dbReference type="PDB" id="6S7T"/>
    </source>
</evidence>
<keyword id="KW-0002">3D-structure</keyword>
<keyword id="KW-0007">Acetylation</keyword>
<keyword id="KW-0900">Congenital disorder of glycosylation</keyword>
<keyword id="KW-0256">Endoplasmic reticulum</keyword>
<keyword id="KW-0325">Glycoprotein</keyword>
<keyword id="KW-0328">Glycosyltransferase</keyword>
<keyword id="KW-0460">Magnesium</keyword>
<keyword id="KW-0464">Manganese</keyword>
<keyword id="KW-0472">Membrane</keyword>
<keyword id="KW-0479">Metal-binding</keyword>
<keyword id="KW-0597">Phosphoprotein</keyword>
<keyword id="KW-1267">Proteomics identification</keyword>
<keyword id="KW-1185">Reference proteome</keyword>
<keyword id="KW-0808">Transferase</keyword>
<keyword id="KW-0812">Transmembrane</keyword>
<keyword id="KW-1133">Transmembrane helix</keyword>
<organism>
    <name type="scientific">Homo sapiens</name>
    <name type="common">Human</name>
    <dbReference type="NCBI Taxonomy" id="9606"/>
    <lineage>
        <taxon>Eukaryota</taxon>
        <taxon>Metazoa</taxon>
        <taxon>Chordata</taxon>
        <taxon>Craniata</taxon>
        <taxon>Vertebrata</taxon>
        <taxon>Euteleostomi</taxon>
        <taxon>Mammalia</taxon>
        <taxon>Eutheria</taxon>
        <taxon>Euarchontoglires</taxon>
        <taxon>Primates</taxon>
        <taxon>Haplorrhini</taxon>
        <taxon>Catarrhini</taxon>
        <taxon>Hominidae</taxon>
        <taxon>Homo</taxon>
    </lineage>
</organism>